<proteinExistence type="inferred from homology"/>
<name>UL97_ELHVK</name>
<feature type="chain" id="PRO_0000408175" description="Phosphotransferase UL97 homolog">
    <location>
        <begin position="1"/>
        <end position="512"/>
    </location>
</feature>
<feature type="active site" description="Proton acceptor" evidence="1">
    <location>
        <position position="274"/>
    </location>
</feature>
<organism>
    <name type="scientific">Elephantid herpesvirus 1 (isolate Asian elephant/Berlin/Kiba/1998)</name>
    <name type="common">EIHV-1</name>
    <name type="synonym">Elephant endotheliotropic herpesvirus</name>
    <dbReference type="NCBI Taxonomy" id="654902"/>
    <lineage>
        <taxon>Viruses</taxon>
        <taxon>Duplodnaviria</taxon>
        <taxon>Heunggongvirae</taxon>
        <taxon>Peploviricota</taxon>
        <taxon>Herviviricetes</taxon>
        <taxon>Herpesvirales</taxon>
        <taxon>Orthoherpesviridae</taxon>
        <taxon>Betaherpesvirinae</taxon>
        <taxon>Proboscivirus</taxon>
        <taxon>Proboscivirus elephantidbeta1</taxon>
        <taxon>Elephantid herpesvirus 1</taxon>
    </lineage>
</organism>
<organismHost>
    <name type="scientific">Elephas maximus</name>
    <name type="common">Indian elephant</name>
    <dbReference type="NCBI Taxonomy" id="9783"/>
</organismHost>
<organismHost>
    <name type="scientific">Loxodonta africana</name>
    <name type="common">African elephant</name>
    <dbReference type="NCBI Taxonomy" id="9785"/>
</organismHost>
<organismHost>
    <name type="scientific">Loxodonta cyclotis</name>
    <name type="common">African forest elephant</name>
    <dbReference type="NCBI Taxonomy" id="99490"/>
</organismHost>
<dbReference type="EC" id="2.7.1.-"/>
<dbReference type="EMBL" id="AF322977">
    <property type="protein sequence ID" value="ABG36589.1"/>
    <property type="molecule type" value="Genomic_DNA"/>
</dbReference>
<dbReference type="GO" id="GO:0005524">
    <property type="term" value="F:ATP binding"/>
    <property type="evidence" value="ECO:0007669"/>
    <property type="project" value="InterPro"/>
</dbReference>
<dbReference type="GO" id="GO:0004713">
    <property type="term" value="F:protein tyrosine kinase activity"/>
    <property type="evidence" value="ECO:0007669"/>
    <property type="project" value="RHEA"/>
</dbReference>
<dbReference type="GO" id="GO:0016032">
    <property type="term" value="P:viral process"/>
    <property type="evidence" value="ECO:0007669"/>
    <property type="project" value="InterPro"/>
</dbReference>
<dbReference type="Gene3D" id="1.10.510.10">
    <property type="entry name" value="Transferase(Phosphotransferase) domain 1"/>
    <property type="match status" value="1"/>
</dbReference>
<dbReference type="InterPro" id="IPR010615">
    <property type="entry name" value="Herpes_UL97"/>
</dbReference>
<dbReference type="InterPro" id="IPR011009">
    <property type="entry name" value="Kinase-like_dom_sf"/>
</dbReference>
<dbReference type="InterPro" id="IPR008266">
    <property type="entry name" value="Tyr_kinase_AS"/>
</dbReference>
<dbReference type="Pfam" id="PF06734">
    <property type="entry name" value="UL97"/>
    <property type="match status" value="1"/>
</dbReference>
<dbReference type="SUPFAM" id="SSF56112">
    <property type="entry name" value="Protein kinase-like (PK-like)"/>
    <property type="match status" value="1"/>
</dbReference>
<dbReference type="PROSITE" id="PS00109">
    <property type="entry name" value="PROTEIN_KINASE_TYR"/>
    <property type="match status" value="1"/>
</dbReference>
<sequence length="512" mass="58919">MLSKIMASKSQSVCSFKKYKNFFMNNVRLLRESILLNTNHDVVTEQKCHKSDQNPKRSRAKIQKRYNSEKKHACCVSNLHLTCVEVSLSSSSPSQSDPRTVDNDSSVARKKRVTAYLQQVECDEDFFKDLRLPTKHSETDKWTLVYVPRVFSDCDSYCARPRKRLLGAGSYGEAYLTDRGVTKKVFSNSEILAEAYMLANIIQVEGWEIHAAHLRIANSICFRHNTVSYTFYKTDLYHFNAHSVDALENYRYTFRQLCDAICFLNLRCKLVHADVSASNILINTDEEYILHAVLGDYSLCSRHDRERAIIIMNENNGKSLGVCQSDLQVEGTYQIVYRPLHLMFWCVTMRTLSIWQLCREAREFCVMDLCALGRVATLFTLHLISHETSVSVRRGLFSVHKKYEKEKTANGHKVEYGIHVILNSLWIVTCLCPTFYKQSGISMMTKLIEAFPQHEKCLNTYTKWLGEELPFRGVGIILENKYGQELLDFISKTSGVDDFRKPLGPIFETLTV</sequence>
<protein>
    <recommendedName>
        <fullName>Phosphotransferase UL97 homolog</fullName>
        <ecNumber>2.7.1.-</ecNumber>
    </recommendedName>
</protein>
<reference key="1">
    <citation type="journal article" date="2007" name="J. Virol.">
        <title>Identification of novel rodent herpesviruses, including the first gammaherpesvirus of Mus musculus.</title>
        <authorList>
            <person name="Ehlers B."/>
            <person name="Kuchler J."/>
            <person name="Yasmum N."/>
            <person name="Dural G."/>
            <person name="Voigt S."/>
            <person name="Schmidt-Chanasit J."/>
            <person name="Jakel T."/>
            <person name="Matuschka F.R."/>
            <person name="Richter D."/>
            <person name="Essbauer S."/>
            <person name="Hughes D.J."/>
            <person name="Summers C."/>
            <person name="Bennett M."/>
            <person name="Stewart J.P."/>
            <person name="Ulrich R.G."/>
        </authorList>
    </citation>
    <scope>NUCLEOTIDE SEQUENCE [GENOMIC DNA]</scope>
</reference>
<reference key="2">
    <citation type="journal article" date="2001" name="J. Gen. Virol.">
        <title>Genetic and ultrastructural characterization of a European isolate of the fatal endotheliotropic elephant herpesvirus.</title>
        <authorList>
            <person name="Ehlers B."/>
            <person name="Burkhardt S."/>
            <person name="Goltz M."/>
            <person name="Bergmann V."/>
            <person name="Ochs A."/>
            <person name="Weiler H."/>
            <person name="Hentschke J."/>
        </authorList>
    </citation>
    <scope>NUCLEOTIDE SEQUENCE [GENOMIC DNA]</scope>
</reference>
<accession>Q18LD0</accession>
<comment type="catalytic activity">
    <reaction evidence="1">
        <text>L-tyrosyl-[protein] + ATP = O-phospho-L-tyrosyl-[protein] + ADP + H(+)</text>
        <dbReference type="Rhea" id="RHEA:10596"/>
        <dbReference type="Rhea" id="RHEA-COMP:10136"/>
        <dbReference type="Rhea" id="RHEA-COMP:20101"/>
        <dbReference type="ChEBI" id="CHEBI:15378"/>
        <dbReference type="ChEBI" id="CHEBI:30616"/>
        <dbReference type="ChEBI" id="CHEBI:46858"/>
        <dbReference type="ChEBI" id="CHEBI:61978"/>
        <dbReference type="ChEBI" id="CHEBI:456216"/>
    </reaction>
</comment>
<comment type="similarity">
    <text evidence="2">Belongs to the protein kinase superfamily. Tyr protein kinase family.</text>
</comment>
<evidence type="ECO:0000255" key="1">
    <source>
        <dbReference type="PROSITE-ProRule" id="PRU10028"/>
    </source>
</evidence>
<evidence type="ECO:0000305" key="2"/>
<keyword id="KW-0418">Kinase</keyword>
<keyword id="KW-0808">Transferase</keyword>